<proteinExistence type="evidence at protein level"/>
<sequence>MLSRLFRMHGLFVASHPWEVIVGTVTLTICMMSMNMFTGNNKICGWNYECPKFEEDVLSSDIIILTITRCIAILYIYFQFQNLRQLGSKYILGIAGLFTIFSSFVFSTVVIHFLDKELTGLNEALPFFLLLIDLSRASALAKFALSSNSQDEVRENIARGMAILGPTFTLDALVECLVIGVGTMSGVRQLEIMCCFGCMSVLANYFVFMTFFPACVSLVLELSRESREGRPIWQLSHFARVLEEEENKPNPVTQRVKMIMSLGLVLVHAHSRWIADPSPQNSTTEHSKVSLGLDEDVSKRIEPSVSLWQFYLSKMISMDIEQVVTLSLAFLLAVKYIFFEQAETESTLSLKNPITSPVVTPKKAPDNCCRREPLLVRRSEKLSSVEEEPGVSQDRKVEVIKPLVVETESASRATFVLGASGTSPPVAARTQELEIELPSEPRPNEECLQILESAEKGAKFLSDAEIIQLVNAKHIPAYKLETLMETHERGVSIRRQLLSTKLPEPSSLQYLPYRDYNYSLVMGACCENVIGYMPIPVGVAGPLCLDGKEYQVPMATTEGCLVASTNRGCRAIGLGGGASSRVLADGMTRGPVVRLPRACDSAEVKAWLETPEGFAVIKDAFDSTSRFARLQKLHVTMAGRNLYIRFQSKTGDAMGMNMISKGTEKALLKLQEFFPEMQILAVSGNYCTDKKPAAINWIEGRGKTVVCEAVIPAKVVREVLKTTTEAMIDVNINKNLVGSAMAGSIGGYNAHAANIVTAIYIACGQDAAQNVGSSNCITLMEASGPTNEDLYISCTMPSIEIGTVGGGTNLLPQQACLQMLGVQGACKDNPGENARQLARIVCGTVMAGELSLMAALAAGHLVRSHMVHNRSKINLQDLQGTCTKKSA</sequence>
<keyword id="KW-0002">3D-structure</keyword>
<keyword id="KW-0152">Cholesterol biosynthesis</keyword>
<keyword id="KW-0153">Cholesterol metabolism</keyword>
<keyword id="KW-0256">Endoplasmic reticulum</keyword>
<keyword id="KW-0325">Glycoprotein</keyword>
<keyword id="KW-1017">Isopeptide bond</keyword>
<keyword id="KW-0444">Lipid biosynthesis</keyword>
<keyword id="KW-0443">Lipid metabolism</keyword>
<keyword id="KW-0472">Membrane</keyword>
<keyword id="KW-0521">NADP</keyword>
<keyword id="KW-0560">Oxidoreductase</keyword>
<keyword id="KW-0576">Peroxisome</keyword>
<keyword id="KW-0597">Phosphoprotein</keyword>
<keyword id="KW-0752">Steroid biosynthesis</keyword>
<keyword id="KW-0753">Steroid metabolism</keyword>
<keyword id="KW-0756">Sterol biosynthesis</keyword>
<keyword id="KW-1207">Sterol metabolism</keyword>
<keyword id="KW-0812">Transmembrane</keyword>
<keyword id="KW-1133">Transmembrane helix</keyword>
<keyword id="KW-0832">Ubl conjugation</keyword>
<reference key="1">
    <citation type="journal article" date="1984" name="Nature">
        <title>Nucleotide sequence of 3-hydroxy-3-methyl-glutaryl coenzyme A reductase, a glycoprotein of endoplasmic reticulum.</title>
        <authorList>
            <person name="Chin D.J."/>
            <person name="Gil G."/>
            <person name="Russell D.W."/>
            <person name="Liscum L."/>
            <person name="Luskey K.L."/>
            <person name="Basu S.K."/>
            <person name="Okayama H."/>
            <person name="Berg P."/>
            <person name="Goldstein J.L."/>
            <person name="Brown M.S."/>
        </authorList>
    </citation>
    <scope>NUCLEOTIDE SEQUENCE [GENOMIC DNA]</scope>
    <scope>SUBCELLULAR LOCATION</scope>
</reference>
<reference key="2">
    <citation type="journal article" date="1983" name="Proc. Natl. Acad. Sci. U.S.A.">
        <title>3-Hydroxy-3-methylglutaryl-CoA reductase: a transmembrane glycoprotein of the endoplasmic reticulum with N-linked 'high-mannose' oligosaccharides.</title>
        <authorList>
            <person name="Liscum L."/>
            <person name="Cummings R.D."/>
            <person name="Anderson R.G."/>
            <person name="DeMartino G.N."/>
            <person name="Goldstein J.L."/>
            <person name="Brown M.S."/>
        </authorList>
    </citation>
    <scope>GLYCOSYLATION</scope>
    <scope>STRUCTURE OF CARBOHYDRATES</scope>
</reference>
<reference key="3">
    <citation type="journal article" date="1984" name="Cell">
        <title>HMG CoA reductase: a negatively regulated gene with unusual promoter and 5' untranslated regions.</title>
        <authorList>
            <person name="Reynolds G.A."/>
            <person name="Basu S.K."/>
            <person name="Osborne T.F."/>
            <person name="Chin D.J."/>
            <person name="Gil G."/>
            <person name="Brown M.S."/>
            <person name="Goldstein J.L."/>
            <person name="Luskey K.L."/>
        </authorList>
    </citation>
    <scope>GENE STRUCTURE</scope>
</reference>
<reference key="4">
    <citation type="journal article" date="1985" name="J. Biol. Chem.">
        <title>Domain structure of 3-hydroxy-3-methylglutaryl coenzyme A reductase, a glycoprotein of the endoplasmic reticulum.</title>
        <authorList>
            <person name="Liscum L."/>
            <person name="Finer-Moore J."/>
            <person name="Stroud R.M."/>
            <person name="Luskey K.L."/>
            <person name="Brown M.S."/>
            <person name="Goldstein J.L."/>
        </authorList>
    </citation>
    <scope>DOMAINS</scope>
</reference>
<reference key="5">
    <citation type="journal article" date="1992" name="J. Cell Biol.">
        <title>Immunological evidence for eight spans in the membrane domain of 3-hydroxy-3-methylglutaryl coenzyme A reductase: implications for enzyme degradation in the endoplasmic reticulum.</title>
        <authorList>
            <person name="Roitelman J."/>
            <person name="Olender E.H."/>
            <person name="Bar-Nun S."/>
            <person name="Dunn W.A. Jr."/>
            <person name="Simoni R.D."/>
        </authorList>
    </citation>
    <scope>TOPOLOGY</scope>
</reference>
<reference key="6">
    <citation type="journal article" date="1993" name="Proc. Natl. Acad. Sci. U.S.A.">
        <title>Replacement of serine-871 of hamster 3-hydroxy-3-methylglutaryl-CoA reductase prevents phosphorylation by AMP-activated kinase and blocks inhibition of sterol synthesis induced by ATP depletion.</title>
        <authorList>
            <person name="Sato R."/>
            <person name="Goldstein J.L."/>
            <person name="Brown M.S."/>
        </authorList>
    </citation>
    <scope>PHOSPHORYLATION AT SER-871</scope>
    <scope>MUTAGENESIS OF SER-871</scope>
    <scope>ACTIVITY REGULATION</scope>
    <scope>CATALYTIC ACTIVITY</scope>
    <scope>FUNCTION</scope>
</reference>
<reference key="7">
    <citation type="journal article" date="2003" name="J. Biol. Chem.">
        <title>Insig-dependent ubiquitination and degradation of mammalian 3-hydroxy-3-methylglutaryl-CoA reductase stimulated by sterols and geranylgeraniol.</title>
        <authorList>
            <person name="Sever N."/>
            <person name="Song B.L."/>
            <person name="Yabe D."/>
            <person name="Goldstein J.L."/>
            <person name="Brown M.S."/>
            <person name="DeBose-Boyd R.A."/>
        </authorList>
    </citation>
    <scope>UBIQUITINATION AT LYS-89 AND LYS-248</scope>
    <scope>MUTAGENESIS OF TYR-75; ILE-76; TYR-77; PHE-78; LYS-89 AND LYS-248</scope>
</reference>
<reference key="8">
    <citation type="journal article" date="2004" name="J. Biol. Chem.">
        <title>Ubiquitin is conjugated by membrane ubiquitin ligase to three sites, including the N terminus, in transmembrane region of mammalian 3-hydroxy-3-methylglutaryl coenzyme A reductase: implications for sterol-regulated enzyme degradation.</title>
        <authorList>
            <person name="Doolman R."/>
            <person name="Leichner G.S."/>
            <person name="Avner R."/>
            <person name="Roitelman J."/>
        </authorList>
    </citation>
    <scope>UBIQUITINATION AT LYS-89 AND LYS-248</scope>
</reference>
<reference key="9">
    <citation type="journal article" date="2007" name="J. Lipid Res.">
        <title>Mutations within the membrane domain of HMG-CoA reductase confer resistance to sterol-accelerated degradation.</title>
        <authorList>
            <person name="Lee P.C."/>
            <person name="Nguyen A.D."/>
            <person name="Debose-Boyd R.A."/>
        </authorList>
    </citation>
    <scope>UBIQUITINATION</scope>
    <scope>INTERACTION WITH INSIG1</scope>
    <scope>MUTAGENESIS OF SER-60; GLY-87 AND ALA-333</scope>
</reference>
<reference key="10">
    <citation type="journal article" date="2018" name="J. Biol. Chem.">
        <title>Ring finger protein 145 (RNF145) is a ubiquitin ligase for sterol-induced degradation of HMG-CoA reductase.</title>
        <authorList>
            <person name="Jiang L.Y."/>
            <person name="Jiang W."/>
            <person name="Tian N."/>
            <person name="Xiong Y.N."/>
            <person name="Liu J."/>
            <person name="Wei J."/>
            <person name="Wu K.Y."/>
            <person name="Luo J."/>
            <person name="Shi X.J."/>
            <person name="Song B.L."/>
        </authorList>
    </citation>
    <scope>UBIQUITINATION</scope>
</reference>
<evidence type="ECO:0000250" key="1">
    <source>
        <dbReference type="UniProtKB" id="P04035"/>
    </source>
</evidence>
<evidence type="ECO:0000255" key="2"/>
<evidence type="ECO:0000255" key="3">
    <source>
        <dbReference type="PROSITE-ProRule" id="PRU00199"/>
    </source>
</evidence>
<evidence type="ECO:0000255" key="4">
    <source>
        <dbReference type="PROSITE-ProRule" id="PRU10003"/>
    </source>
</evidence>
<evidence type="ECO:0000269" key="5">
    <source>
    </source>
</evidence>
<evidence type="ECO:0000269" key="6">
    <source>
    </source>
</evidence>
<evidence type="ECO:0000269" key="7">
    <source>
    </source>
</evidence>
<evidence type="ECO:0000269" key="8">
    <source>
    </source>
</evidence>
<evidence type="ECO:0000269" key="9">
    <source>
    </source>
</evidence>
<evidence type="ECO:0000269" key="10">
    <source>
    </source>
</evidence>
<evidence type="ECO:0000269" key="11">
    <source>
    </source>
</evidence>
<evidence type="ECO:0000269" key="12">
    <source>
    </source>
</evidence>
<evidence type="ECO:0000305" key="13"/>
<evidence type="ECO:0000305" key="14">
    <source>
    </source>
</evidence>
<evidence type="ECO:0007829" key="15">
    <source>
        <dbReference type="PDB" id="8DJK"/>
    </source>
</evidence>
<evidence type="ECO:0007829" key="16">
    <source>
        <dbReference type="PDB" id="8DJM"/>
    </source>
</evidence>
<protein>
    <recommendedName>
        <fullName>3-hydroxy-3-methylglutaryl-coenzyme A reductase</fullName>
        <shortName>HMG-CoA reductase</shortName>
        <ecNumber evidence="1">1.1.1.34</ecNumber>
    </recommendedName>
</protein>
<name>HMDH_CRIGR</name>
<organism>
    <name type="scientific">Cricetulus griseus</name>
    <name type="common">Chinese hamster</name>
    <name type="synonym">Cricetulus barabensis griseus</name>
    <dbReference type="NCBI Taxonomy" id="10029"/>
    <lineage>
        <taxon>Eukaryota</taxon>
        <taxon>Metazoa</taxon>
        <taxon>Chordata</taxon>
        <taxon>Craniata</taxon>
        <taxon>Vertebrata</taxon>
        <taxon>Euteleostomi</taxon>
        <taxon>Mammalia</taxon>
        <taxon>Eutheria</taxon>
        <taxon>Euarchontoglires</taxon>
        <taxon>Glires</taxon>
        <taxon>Rodentia</taxon>
        <taxon>Myomorpha</taxon>
        <taxon>Muroidea</taxon>
        <taxon>Cricetidae</taxon>
        <taxon>Cricetinae</taxon>
        <taxon>Cricetulus</taxon>
    </lineage>
</organism>
<comment type="function">
    <text evidence="1">Catalyzes the conversion of (3S)-hydroxy-3-methylglutaryl-CoA (HMG-CoA) to mevalonic acid, the rate-limiting step in the synthesis of cholesterol and other isoprenoids, thus plays a critical role in cellular cholesterol homeostasis.</text>
</comment>
<comment type="catalytic activity">
    <reaction evidence="1">
        <text>(R)-mevalonate + 2 NADP(+) + CoA = (3S)-3-hydroxy-3-methylglutaryl-CoA + 2 NADPH + 2 H(+)</text>
        <dbReference type="Rhea" id="RHEA:15989"/>
        <dbReference type="ChEBI" id="CHEBI:15378"/>
        <dbReference type="ChEBI" id="CHEBI:36464"/>
        <dbReference type="ChEBI" id="CHEBI:43074"/>
        <dbReference type="ChEBI" id="CHEBI:57287"/>
        <dbReference type="ChEBI" id="CHEBI:57783"/>
        <dbReference type="ChEBI" id="CHEBI:58349"/>
        <dbReference type="EC" id="1.1.1.34"/>
    </reaction>
    <physiologicalReaction direction="right-to-left" evidence="1">
        <dbReference type="Rhea" id="RHEA:15991"/>
    </physiologicalReaction>
</comment>
<comment type="activity regulation">
    <text evidence="1 12">Regulated by a negative feedback mechanism through sterols and non-sterol metabolites derived from mevalonate (By similarity). Phosphorylation at Ser-871 down-regulates the catalytic activity (PubMed:8415689).</text>
</comment>
<comment type="pathway">
    <text>Metabolic intermediate biosynthesis; (R)-mevalonate biosynthesis; (R)-mevalonate from acetyl-CoA: step 3/3.</text>
</comment>
<comment type="subunit">
    <text evidence="1 8">Homotetramer. Homodimer. Interacts (via its SSD) with INSIG1; the interaction, accelerated by sterols, leads to the recruitment of HMGCR to AMFR/gp78 for its ubiquitination by the sterol-mediated ERAD pathway (PubMed:17090658). Interacts with UBIAD1 (By similarity).</text>
</comment>
<comment type="interaction">
    <interactant intactId="EBI-11426687">
        <id>P00347</id>
    </interactant>
    <interactant intactId="EBI-4400770">
        <id>O94905</id>
        <label>ERLIN2</label>
    </interactant>
    <organismsDiffer>true</organismsDiffer>
    <experiments>2</experiments>
</comment>
<comment type="interaction">
    <interactant intactId="EBI-11426687">
        <id>P00347</id>
    </interactant>
    <interactant intactId="EBI-6252425">
        <id>O15503</id>
        <label>INSIG1</label>
    </interactant>
    <organismsDiffer>true</organismsDiffer>
    <experiments>2</experiments>
</comment>
<comment type="subcellular location">
    <subcellularLocation>
        <location evidence="10">Endoplasmic reticulum membrane</location>
        <topology evidence="5">Multi-pass membrane protein</topology>
    </subcellularLocation>
    <subcellularLocation>
        <location evidence="1">Peroxisome membrane</location>
        <topology evidence="5">Multi-pass membrane protein</topology>
    </subcellularLocation>
</comment>
<comment type="PTM">
    <text evidence="1 11">N-glycosylated. Glycosylated with high mannose chains including Man(6)(GlcNAc)(2), Man(7)(GlcNAc)(2) and Man(8)(GlcNAc)(2) (PubMed:6580634). Deglycosylated by NGLY1 on release from the endoplasmic reticulum (ER) in a sterol-mediated manner (By similarity).</text>
</comment>
<comment type="PTM">
    <text evidence="1 6 7 8 9">Undergoes sterol-mediated ubiquitination and ER-associated degradation (ERAD) (PubMed:14563840, PubMed:15247208, PubMed:17090658, PubMed:29374057). Accumulation of sterols in the endoplasmic reticulum (ER) membrane, triggers binding of the reductase to the ER membrane protein INSIG1 or INSIG2 (PubMed:14563840, PubMed:17090658). The INSIG1 binding leads to the recruitment of the ubiquitin ligase, AMFR/gp78, RNF139 or RNF145, initiating ubiquitination of the reductase (PubMed:14563840, PubMed:29374057). The ubiquitinated reductase is then extracted from the ER membrane and delivered to cytosolic 26S proteosomes by a mechanism probably mediated by the ATPase Valosin-containing protein VCP/p97 (PubMed:14563840). The INSIG2-binding leads to the recruitment of the ubiquitin ligase RNF139, initiating ubiquitination of the reductase (By similarity). Lys-248 is the main site of ubiquitination (PubMed:14563840, PubMed:15247208). Ubiquitination is enhanced by the presence of a geranylgeranylated protein (By similarity).</text>
</comment>
<comment type="PTM">
    <text evidence="12">Phosphorylated. Phosphorylation at Ser-871 reduces the catalytic activity.</text>
</comment>
<comment type="similarity">
    <text evidence="13">Belongs to the HMG-CoA reductase family.</text>
</comment>
<gene>
    <name type="primary">HMGCR</name>
</gene>
<feature type="chain" id="PRO_0000114418" description="3-hydroxy-3-methylglutaryl-coenzyme A reductase">
    <location>
        <begin position="1"/>
        <end position="887"/>
    </location>
</feature>
<feature type="topological domain" description="Cytoplasmic" evidence="14">
    <location>
        <begin position="1"/>
        <end position="9"/>
    </location>
</feature>
<feature type="transmembrane region" description="Helical" evidence="14">
    <location>
        <begin position="10"/>
        <end position="39"/>
    </location>
</feature>
<feature type="topological domain" description="Lumenal" evidence="14">
    <location>
        <begin position="40"/>
        <end position="56"/>
    </location>
</feature>
<feature type="transmembrane region" description="Helical" evidence="14">
    <location>
        <begin position="57"/>
        <end position="78"/>
    </location>
</feature>
<feature type="topological domain" description="Cytoplasmic" evidence="14">
    <location>
        <begin position="79"/>
        <end position="89"/>
    </location>
</feature>
<feature type="transmembrane region" description="Helical" evidence="14">
    <location>
        <begin position="90"/>
        <end position="114"/>
    </location>
</feature>
<feature type="topological domain" description="Lumenal" evidence="14">
    <location>
        <begin position="115"/>
        <end position="123"/>
    </location>
</feature>
<feature type="transmembrane region" description="Helical" evidence="14">
    <location>
        <begin position="124"/>
        <end position="149"/>
    </location>
</feature>
<feature type="topological domain" description="Cytoplasmic" evidence="14">
    <location>
        <begin position="150"/>
        <end position="159"/>
    </location>
</feature>
<feature type="transmembrane region" description="Helical" evidence="14">
    <location>
        <begin position="160"/>
        <end position="187"/>
    </location>
</feature>
<feature type="topological domain" description="Lumenal" evidence="14">
    <location>
        <begin position="188"/>
        <end position="191"/>
    </location>
</feature>
<feature type="transmembrane region" description="Helical" evidence="14">
    <location>
        <begin position="192"/>
        <end position="220"/>
    </location>
</feature>
<feature type="topological domain" description="Cytoplasmic" evidence="5">
    <location>
        <begin position="221"/>
        <end position="248"/>
    </location>
</feature>
<feature type="transmembrane region" description="Helical" evidence="14">
    <location>
        <begin position="249"/>
        <end position="275"/>
    </location>
</feature>
<feature type="topological domain" description="Lumenal" evidence="5">
    <location>
        <begin position="276"/>
        <end position="314"/>
    </location>
</feature>
<feature type="transmembrane region" description="Helical" evidence="14">
    <location>
        <begin position="315"/>
        <end position="339"/>
    </location>
</feature>
<feature type="topological domain" description="Cytoplasmic" evidence="14">
    <location>
        <begin position="340"/>
        <end position="887"/>
    </location>
</feature>
<feature type="domain" description="SSD" evidence="3">
    <location>
        <begin position="61"/>
        <end position="218"/>
    </location>
</feature>
<feature type="short sequence motif" description="INSIG-binding motif" evidence="1">
    <location>
        <begin position="75"/>
        <end position="78"/>
    </location>
</feature>
<feature type="active site" description="Charge relay system" evidence="1">
    <location>
        <position position="558"/>
    </location>
</feature>
<feature type="active site" description="Charge relay system" evidence="1">
    <location>
        <position position="690"/>
    </location>
</feature>
<feature type="active site" description="Charge relay system" evidence="1">
    <location>
        <position position="766"/>
    </location>
</feature>
<feature type="active site" description="Proton donor" evidence="4">
    <location>
        <position position="865"/>
    </location>
</feature>
<feature type="modified residue" description="Phosphoserine; by AMPK" evidence="12">
    <location>
        <position position="871"/>
    </location>
</feature>
<feature type="glycosylation site" description="N-linked (GlcNAc...) asparagine" evidence="2">
    <location>
        <position position="281"/>
    </location>
</feature>
<feature type="cross-link" description="Glycyl lysine isopeptide (Lys-Gly) (interchain with G-Cter in ubiquitin)" evidence="6 7">
    <location>
        <position position="89"/>
    </location>
</feature>
<feature type="cross-link" description="Glycyl lysine isopeptide (Lys-Gly) (interchain with G-Cter in ubiquitin)" evidence="6 7">
    <location>
        <position position="248"/>
    </location>
</feature>
<feature type="mutagenesis site" description="Abolishes sterol-mediated interaction with INSIG1, and no ubiquitination nor degradation." evidence="8">
    <original>S</original>
    <variation>N</variation>
    <location>
        <position position="60"/>
    </location>
</feature>
<feature type="mutagenesis site" description="Very little effect on the sterol-mediated ubiquitination and degradation of HMGCR. Marked reduction in the sterol-mediated ubiquitination and degradation of HMGCR; when associated with A-77. Completely abolishes the sterol effect on ubiquitination and degradation of HMGCR; when associated with A-76; A-77 and A-78." evidence="6">
    <original>Y</original>
    <variation>A</variation>
    <location>
        <position position="75"/>
    </location>
</feature>
<feature type="mutagenesis site" description="Greatly reduced sterol-mediated ubiquitination and degradation of HMGCR. Completely abolishes the sterol effect on ubiquitination and degradation of HMGCR; when associated with A-75; A-77 and A-78." evidence="6">
    <original>I</original>
    <variation>A</variation>
    <location>
        <position position="76"/>
    </location>
</feature>
<feature type="mutagenesis site" description="Greatly reduced sterol-mediated ubiquitination and degradation of HMGCR. Marked reduction in the sterol-mediated ubiquitination and degradation of HMGCR; when associated with A-75. Completely abolishes the sterol effect on ubiquitination and degradation of HMGCR; when associated with A-75; A-76 and A-78." evidence="6">
    <original>Y</original>
    <variation>A</variation>
    <location>
        <position position="77"/>
    </location>
</feature>
<feature type="mutagenesis site" description="Very little effect on the sterol-mediated ubiquitination and degradation of HMGCR. Completely abolishes the sterol effect on ubiquitination and degradation of HMGCR; when associated with A-75; A-76 and A-77." evidence="6">
    <original>F</original>
    <variation>A</variation>
    <location>
        <position position="78"/>
    </location>
</feature>
<feature type="mutagenesis site" description="Abolishes sterol-mediated interaction with INSIG1, and no ubiquitination nor degradation." evidence="8">
    <original>G</original>
    <variation>R</variation>
    <location>
        <position position="87"/>
    </location>
</feature>
<feature type="mutagenesis site" description="Little effect on sterol plus mevalonate-stimulated ubiquitination and degradation of HMGCR in the presence of INSIG1. No sterol plus mevalonate-stimulated ubiquitination and degradation of HMGCR in the presence of INSIG1; when associated with R-248." evidence="6">
    <original>K</original>
    <variation>R</variation>
    <location>
        <position position="89"/>
    </location>
</feature>
<feature type="mutagenesis site" description="Some reduction in sterol plus mevalonate-stimulated ubiquitination and degradation of HMGCR in the presence of INSIG1. No sterol plus mevalonate-stimulated ubiquitination and degradation of HMGCR in the presence of INSIG1; when associated with R-89." evidence="6">
    <original>K</original>
    <variation>R</variation>
    <location>
        <position position="248"/>
    </location>
</feature>
<feature type="mutagenesis site" description="Abolishes sterol-mediated interaction with INSIG1, and no ubiquitination nor degradation." evidence="8">
    <original>A</original>
    <variation>P</variation>
    <location>
        <position position="333"/>
    </location>
</feature>
<feature type="mutagenesis site" description="Abolishes phosphorylation by AMPK. Blocks inhibition of sterol synthesis induced by ATP depletion." evidence="12">
    <original>S</original>
    <variation>A</variation>
    <location>
        <position position="871"/>
    </location>
</feature>
<feature type="helix" evidence="16">
    <location>
        <begin position="2"/>
        <end position="15"/>
    </location>
</feature>
<feature type="helix" evidence="16">
    <location>
        <begin position="17"/>
        <end position="32"/>
    </location>
</feature>
<feature type="helix" evidence="16">
    <location>
        <begin position="62"/>
        <end position="84"/>
    </location>
</feature>
<feature type="strand" evidence="15">
    <location>
        <begin position="85"/>
        <end position="87"/>
    </location>
</feature>
<feature type="helix" evidence="16">
    <location>
        <begin position="89"/>
        <end position="112"/>
    </location>
</feature>
<feature type="helix" evidence="16">
    <location>
        <begin position="125"/>
        <end position="131"/>
    </location>
</feature>
<feature type="helix" evidence="16">
    <location>
        <begin position="134"/>
        <end position="145"/>
    </location>
</feature>
<feature type="helix" evidence="16">
    <location>
        <begin position="150"/>
        <end position="180"/>
    </location>
</feature>
<feature type="helix" evidence="16">
    <location>
        <begin position="181"/>
        <end position="184"/>
    </location>
</feature>
<feature type="helix" evidence="16">
    <location>
        <begin position="188"/>
        <end position="222"/>
    </location>
</feature>
<feature type="helix" evidence="16">
    <location>
        <begin position="236"/>
        <end position="246"/>
    </location>
</feature>
<feature type="helix" evidence="16">
    <location>
        <begin position="251"/>
        <end position="272"/>
    </location>
</feature>
<dbReference type="EC" id="1.1.1.34" evidence="1"/>
<dbReference type="EMBL" id="L00183">
    <property type="protein sequence ID" value="AAA36989.1"/>
    <property type="molecule type" value="Genomic_DNA"/>
</dbReference>
<dbReference type="EMBL" id="L00166">
    <property type="protein sequence ID" value="AAA36989.1"/>
    <property type="status" value="JOINED"/>
    <property type="molecule type" value="Genomic_DNA"/>
</dbReference>
<dbReference type="EMBL" id="L00169">
    <property type="protein sequence ID" value="AAA36989.1"/>
    <property type="status" value="JOINED"/>
    <property type="molecule type" value="Genomic_DNA"/>
</dbReference>
<dbReference type="EMBL" id="L00170">
    <property type="protein sequence ID" value="AAA36989.1"/>
    <property type="status" value="JOINED"/>
    <property type="molecule type" value="Genomic_DNA"/>
</dbReference>
<dbReference type="EMBL" id="L00171">
    <property type="protein sequence ID" value="AAA36989.1"/>
    <property type="status" value="JOINED"/>
    <property type="molecule type" value="Genomic_DNA"/>
</dbReference>
<dbReference type="EMBL" id="L00173">
    <property type="protein sequence ID" value="AAA36989.1"/>
    <property type="status" value="JOINED"/>
    <property type="molecule type" value="Genomic_DNA"/>
</dbReference>
<dbReference type="EMBL" id="L00176">
    <property type="protein sequence ID" value="AAA36989.1"/>
    <property type="status" value="JOINED"/>
    <property type="molecule type" value="Genomic_DNA"/>
</dbReference>
<dbReference type="EMBL" id="L00177">
    <property type="protein sequence ID" value="AAA36989.1"/>
    <property type="status" value="JOINED"/>
    <property type="molecule type" value="Genomic_DNA"/>
</dbReference>
<dbReference type="EMBL" id="L00178">
    <property type="protein sequence ID" value="AAA36989.1"/>
    <property type="status" value="JOINED"/>
    <property type="molecule type" value="Genomic_DNA"/>
</dbReference>
<dbReference type="EMBL" id="L00179">
    <property type="protein sequence ID" value="AAA36989.1"/>
    <property type="status" value="JOINED"/>
    <property type="molecule type" value="Genomic_DNA"/>
</dbReference>
<dbReference type="EMBL" id="L00180">
    <property type="protein sequence ID" value="AAA36989.1"/>
    <property type="status" value="JOINED"/>
    <property type="molecule type" value="Genomic_DNA"/>
</dbReference>
<dbReference type="EMBL" id="L00181">
    <property type="protein sequence ID" value="AAA36989.1"/>
    <property type="status" value="JOINED"/>
    <property type="molecule type" value="Genomic_DNA"/>
</dbReference>
<dbReference type="EMBL" id="L00182">
    <property type="protein sequence ID" value="AAA36989.1"/>
    <property type="status" value="JOINED"/>
    <property type="molecule type" value="Genomic_DNA"/>
</dbReference>
<dbReference type="EMBL" id="X00494">
    <property type="protein sequence ID" value="CAA25189.1"/>
    <property type="molecule type" value="Genomic_DNA"/>
</dbReference>
<dbReference type="PIR" id="A93328">
    <property type="entry name" value="RDHYE"/>
</dbReference>
<dbReference type="RefSeq" id="XP_003508040.1">
    <property type="nucleotide sequence ID" value="XM_003507992.3"/>
</dbReference>
<dbReference type="RefSeq" id="XP_007634389.1">
    <property type="nucleotide sequence ID" value="XM_007636199.2"/>
</dbReference>
<dbReference type="RefSeq" id="XP_007646809.1">
    <property type="nucleotide sequence ID" value="XM_007648619.2"/>
</dbReference>
<dbReference type="PDB" id="8DJK">
    <property type="method" value="EM"/>
    <property type="resolution" value="3.33 A"/>
    <property type="chains" value="A=2-356"/>
</dbReference>
<dbReference type="PDB" id="8DJM">
    <property type="method" value="EM"/>
    <property type="resolution" value="3.23 A"/>
    <property type="chains" value="A=2-356"/>
</dbReference>
<dbReference type="PDBsum" id="8DJK"/>
<dbReference type="PDBsum" id="8DJM"/>
<dbReference type="EMDB" id="EMD-27460"/>
<dbReference type="EMDB" id="EMD-27461"/>
<dbReference type="SMR" id="P00347"/>
<dbReference type="IntAct" id="P00347">
    <property type="interactions" value="4"/>
</dbReference>
<dbReference type="BindingDB" id="P00347"/>
<dbReference type="ChEMBL" id="CHEMBL5169105"/>
<dbReference type="GlyCosmos" id="P00347">
    <property type="glycosylation" value="1 site, No reported glycans"/>
</dbReference>
<dbReference type="iPTMnet" id="P00347"/>
<dbReference type="PaxDb" id="10029-XP_007634387.1"/>
<dbReference type="Ensembl" id="ENSCGRT00001020833.1">
    <property type="protein sequence ID" value="ENSCGRP00001016589.1"/>
    <property type="gene ID" value="ENSCGRG00001016870.1"/>
</dbReference>
<dbReference type="eggNOG" id="KOG2480">
    <property type="taxonomic scope" value="Eukaryota"/>
</dbReference>
<dbReference type="GeneTree" id="ENSGT00940000155305"/>
<dbReference type="OMA" id="DCHIAMD"/>
<dbReference type="BRENDA" id="1.1.1.34">
    <property type="organism ID" value="1309"/>
</dbReference>
<dbReference type="UniPathway" id="UPA00058">
    <property type="reaction ID" value="UER00103"/>
</dbReference>
<dbReference type="Proteomes" id="UP000694386">
    <property type="component" value="Unplaced"/>
</dbReference>
<dbReference type="Proteomes" id="UP001108280">
    <property type="component" value="Unplaced"/>
</dbReference>
<dbReference type="GO" id="GO:0005783">
    <property type="term" value="C:endoplasmic reticulum"/>
    <property type="evidence" value="ECO:0000250"/>
    <property type="project" value="UniProtKB"/>
</dbReference>
<dbReference type="GO" id="GO:0005789">
    <property type="term" value="C:endoplasmic reticulum membrane"/>
    <property type="evidence" value="ECO:0000304"/>
    <property type="project" value="UniProtKB"/>
</dbReference>
<dbReference type="GO" id="GO:0005778">
    <property type="term" value="C:peroxisomal membrane"/>
    <property type="evidence" value="ECO:0000250"/>
    <property type="project" value="UniProtKB"/>
</dbReference>
<dbReference type="GO" id="GO:0120225">
    <property type="term" value="F:coenzyme A binding"/>
    <property type="evidence" value="ECO:0007669"/>
    <property type="project" value="Ensembl"/>
</dbReference>
<dbReference type="GO" id="GO:0030695">
    <property type="term" value="F:GTPase regulator activity"/>
    <property type="evidence" value="ECO:0007669"/>
    <property type="project" value="Ensembl"/>
</dbReference>
<dbReference type="GO" id="GO:0004420">
    <property type="term" value="F:hydroxymethylglutaryl-CoA reductase (NADPH) activity"/>
    <property type="evidence" value="ECO:0000314"/>
    <property type="project" value="UniProtKB"/>
</dbReference>
<dbReference type="GO" id="GO:0070402">
    <property type="term" value="F:NADPH binding"/>
    <property type="evidence" value="ECO:0007669"/>
    <property type="project" value="Ensembl"/>
</dbReference>
<dbReference type="GO" id="GO:0006695">
    <property type="term" value="P:cholesterol biosynthetic process"/>
    <property type="evidence" value="ECO:0007669"/>
    <property type="project" value="UniProtKB-KW"/>
</dbReference>
<dbReference type="GO" id="GO:0015936">
    <property type="term" value="P:coenzyme A metabolic process"/>
    <property type="evidence" value="ECO:0007669"/>
    <property type="project" value="InterPro"/>
</dbReference>
<dbReference type="GO" id="GO:0008299">
    <property type="term" value="P:isoprenoid biosynthetic process"/>
    <property type="evidence" value="ECO:0007669"/>
    <property type="project" value="InterPro"/>
</dbReference>
<dbReference type="GO" id="GO:0060291">
    <property type="term" value="P:long-term synaptic potentiation"/>
    <property type="evidence" value="ECO:0007669"/>
    <property type="project" value="Ensembl"/>
</dbReference>
<dbReference type="GO" id="GO:1900222">
    <property type="term" value="P:negative regulation of amyloid-beta clearance"/>
    <property type="evidence" value="ECO:0007669"/>
    <property type="project" value="Ensembl"/>
</dbReference>
<dbReference type="GO" id="GO:0042177">
    <property type="term" value="P:negative regulation of protein catabolic process"/>
    <property type="evidence" value="ECO:0007669"/>
    <property type="project" value="Ensembl"/>
</dbReference>
<dbReference type="GO" id="GO:0050709">
    <property type="term" value="P:negative regulation of protein secretion"/>
    <property type="evidence" value="ECO:0007669"/>
    <property type="project" value="Ensembl"/>
</dbReference>
<dbReference type="GO" id="GO:0070372">
    <property type="term" value="P:regulation of ERK1 and ERK2 cascade"/>
    <property type="evidence" value="ECO:0007669"/>
    <property type="project" value="Ensembl"/>
</dbReference>
<dbReference type="GO" id="GO:0008542">
    <property type="term" value="P:visual learning"/>
    <property type="evidence" value="ECO:0007669"/>
    <property type="project" value="Ensembl"/>
</dbReference>
<dbReference type="CDD" id="cd00643">
    <property type="entry name" value="HMG-CoA_reductase_classI"/>
    <property type="match status" value="1"/>
</dbReference>
<dbReference type="FunFam" id="1.10.3270.10:FF:000001">
    <property type="entry name" value="3-hydroxy-3-methylglutaryl coenzyme A reductase"/>
    <property type="match status" value="1"/>
</dbReference>
<dbReference type="FunFam" id="3.30.70.420:FF:000001">
    <property type="entry name" value="3-hydroxy-3-methylglutaryl coenzyme A reductase"/>
    <property type="match status" value="1"/>
</dbReference>
<dbReference type="FunFam" id="3.90.770.10:FF:000002">
    <property type="entry name" value="3-hydroxy-3-methylglutaryl coenzyme A reductase"/>
    <property type="match status" value="1"/>
</dbReference>
<dbReference type="Gene3D" id="3.90.770.10">
    <property type="entry name" value="3-hydroxy-3-methylglutaryl-coenzyme A Reductase, Chain A, domain 2"/>
    <property type="match status" value="1"/>
</dbReference>
<dbReference type="Gene3D" id="1.10.3270.10">
    <property type="entry name" value="HMGR, N-terminal domain"/>
    <property type="match status" value="1"/>
</dbReference>
<dbReference type="Gene3D" id="3.30.70.420">
    <property type="entry name" value="Hydroxymethylglutaryl-CoA reductase, class I/II, NAD/NADP-binding domain"/>
    <property type="match status" value="1"/>
</dbReference>
<dbReference type="InterPro" id="IPR002202">
    <property type="entry name" value="HMG_CoA_Rdtase"/>
</dbReference>
<dbReference type="InterPro" id="IPR023074">
    <property type="entry name" value="HMG_CoA_Rdtase_cat_sf"/>
</dbReference>
<dbReference type="InterPro" id="IPR023076">
    <property type="entry name" value="HMG_CoA_Rdtase_CS"/>
</dbReference>
<dbReference type="InterPro" id="IPR004554">
    <property type="entry name" value="HMG_CoA_Rdtase_eu_arc"/>
</dbReference>
<dbReference type="InterPro" id="IPR004816">
    <property type="entry name" value="HMG_CoA_Rdtase_metazoan"/>
</dbReference>
<dbReference type="InterPro" id="IPR023282">
    <property type="entry name" value="HMG_CoA_Rdtase_N"/>
</dbReference>
<dbReference type="InterPro" id="IPR009023">
    <property type="entry name" value="HMG_CoA_Rdtase_NAD(P)-bd_sf"/>
</dbReference>
<dbReference type="InterPro" id="IPR009029">
    <property type="entry name" value="HMG_CoA_Rdtase_sub-bd_dom_sf"/>
</dbReference>
<dbReference type="InterPro" id="IPR053958">
    <property type="entry name" value="HMGCR/SNAP/NPC1-like_SSD"/>
</dbReference>
<dbReference type="InterPro" id="IPR000731">
    <property type="entry name" value="SSD"/>
</dbReference>
<dbReference type="NCBIfam" id="TIGR00920">
    <property type="entry name" value="2A060605"/>
    <property type="match status" value="1"/>
</dbReference>
<dbReference type="NCBIfam" id="TIGR00533">
    <property type="entry name" value="HMG_CoA_R_NADP"/>
    <property type="match status" value="1"/>
</dbReference>
<dbReference type="PANTHER" id="PTHR10572">
    <property type="entry name" value="3-HYDROXY-3-METHYLGLUTARYL-COENZYME A REDUCTASE"/>
    <property type="match status" value="1"/>
</dbReference>
<dbReference type="PANTHER" id="PTHR10572:SF24">
    <property type="entry name" value="3-HYDROXY-3-METHYLGLUTARYL-COENZYME A REDUCTASE"/>
    <property type="match status" value="1"/>
</dbReference>
<dbReference type="Pfam" id="PF00368">
    <property type="entry name" value="HMG-CoA_red"/>
    <property type="match status" value="1"/>
</dbReference>
<dbReference type="Pfam" id="PF12349">
    <property type="entry name" value="Sterol-sensing"/>
    <property type="match status" value="1"/>
</dbReference>
<dbReference type="PRINTS" id="PR00071">
    <property type="entry name" value="HMGCOARDTASE"/>
</dbReference>
<dbReference type="SUPFAM" id="SSF82866">
    <property type="entry name" value="Multidrug efflux transporter AcrB transmembrane domain"/>
    <property type="match status" value="1"/>
</dbReference>
<dbReference type="SUPFAM" id="SSF55035">
    <property type="entry name" value="NAD-binding domain of HMG-CoA reductase"/>
    <property type="match status" value="1"/>
</dbReference>
<dbReference type="SUPFAM" id="SSF56542">
    <property type="entry name" value="Substrate-binding domain of HMG-CoA reductase"/>
    <property type="match status" value="1"/>
</dbReference>
<dbReference type="PROSITE" id="PS00066">
    <property type="entry name" value="HMG_COA_REDUCTASE_1"/>
    <property type="match status" value="1"/>
</dbReference>
<dbReference type="PROSITE" id="PS00318">
    <property type="entry name" value="HMG_COA_REDUCTASE_2"/>
    <property type="match status" value="1"/>
</dbReference>
<dbReference type="PROSITE" id="PS01192">
    <property type="entry name" value="HMG_COA_REDUCTASE_3"/>
    <property type="match status" value="1"/>
</dbReference>
<dbReference type="PROSITE" id="PS50065">
    <property type="entry name" value="HMG_COA_REDUCTASE_4"/>
    <property type="match status" value="1"/>
</dbReference>
<dbReference type="PROSITE" id="PS50156">
    <property type="entry name" value="SSD"/>
    <property type="match status" value="1"/>
</dbReference>
<accession>P00347</accession>